<proteinExistence type="inferred from homology"/>
<evidence type="ECO:0000255" key="1">
    <source>
        <dbReference type="HAMAP-Rule" id="MF_00549"/>
    </source>
</evidence>
<organism>
    <name type="scientific">Borrelia garinii subsp. bavariensis (strain ATCC BAA-2496 / DSM 23469 / PBi)</name>
    <name type="common">Borreliella bavariensis</name>
    <dbReference type="NCBI Taxonomy" id="290434"/>
    <lineage>
        <taxon>Bacteria</taxon>
        <taxon>Pseudomonadati</taxon>
        <taxon>Spirochaetota</taxon>
        <taxon>Spirochaetia</taxon>
        <taxon>Spirochaetales</taxon>
        <taxon>Borreliaceae</taxon>
        <taxon>Borreliella</taxon>
    </lineage>
</organism>
<name>MGSA_BORGP</name>
<accession>Q661Q5</accession>
<keyword id="KW-0456">Lyase</keyword>
<sequence length="126" mass="13912">MEKKIALIAHDKKKDDLVNFVKQNYLFLSKFKLIATGTTGSRIQQATDLTIIKYKSGPMGGDQQIGAEVAEGNVLAIFFFRDPLTNQPHEPDVSALIRLCDVHNIPLATNVKTAEILIKGFEGLNT</sequence>
<dbReference type="EC" id="4.2.3.3" evidence="1"/>
<dbReference type="EMBL" id="CP000013">
    <property type="protein sequence ID" value="AAU07216.1"/>
    <property type="molecule type" value="Genomic_DNA"/>
</dbReference>
<dbReference type="RefSeq" id="WP_011193690.1">
    <property type="nucleotide sequence ID" value="NZ_CP028872.1"/>
</dbReference>
<dbReference type="SMR" id="Q661Q5"/>
<dbReference type="GeneID" id="45161151"/>
<dbReference type="KEGG" id="bga:BG0363"/>
<dbReference type="eggNOG" id="COG1803">
    <property type="taxonomic scope" value="Bacteria"/>
</dbReference>
<dbReference type="HOGENOM" id="CLU_120420_1_0_12"/>
<dbReference type="OrthoDB" id="9787147at2"/>
<dbReference type="Proteomes" id="UP000002276">
    <property type="component" value="Chromosome"/>
</dbReference>
<dbReference type="GO" id="GO:0005829">
    <property type="term" value="C:cytosol"/>
    <property type="evidence" value="ECO:0007669"/>
    <property type="project" value="TreeGrafter"/>
</dbReference>
<dbReference type="GO" id="GO:0008929">
    <property type="term" value="F:methylglyoxal synthase activity"/>
    <property type="evidence" value="ECO:0007669"/>
    <property type="project" value="UniProtKB-UniRule"/>
</dbReference>
<dbReference type="GO" id="GO:0019242">
    <property type="term" value="P:methylglyoxal biosynthetic process"/>
    <property type="evidence" value="ECO:0007669"/>
    <property type="project" value="UniProtKB-UniRule"/>
</dbReference>
<dbReference type="CDD" id="cd01422">
    <property type="entry name" value="MGS"/>
    <property type="match status" value="1"/>
</dbReference>
<dbReference type="Gene3D" id="3.40.50.1380">
    <property type="entry name" value="Methylglyoxal synthase-like domain"/>
    <property type="match status" value="1"/>
</dbReference>
<dbReference type="HAMAP" id="MF_00549">
    <property type="entry name" value="Methylglyoxal_synth"/>
    <property type="match status" value="1"/>
</dbReference>
<dbReference type="InterPro" id="IPR004363">
    <property type="entry name" value="Methylgl_synth"/>
</dbReference>
<dbReference type="InterPro" id="IPR018148">
    <property type="entry name" value="Methylglyoxal_synth_AS"/>
</dbReference>
<dbReference type="InterPro" id="IPR011607">
    <property type="entry name" value="MGS-like_dom"/>
</dbReference>
<dbReference type="InterPro" id="IPR036914">
    <property type="entry name" value="MGS-like_dom_sf"/>
</dbReference>
<dbReference type="NCBIfam" id="TIGR00160">
    <property type="entry name" value="MGSA"/>
    <property type="match status" value="1"/>
</dbReference>
<dbReference type="NCBIfam" id="NF003559">
    <property type="entry name" value="PRK05234.1"/>
    <property type="match status" value="1"/>
</dbReference>
<dbReference type="PANTHER" id="PTHR30492">
    <property type="entry name" value="METHYLGLYOXAL SYNTHASE"/>
    <property type="match status" value="1"/>
</dbReference>
<dbReference type="PANTHER" id="PTHR30492:SF0">
    <property type="entry name" value="METHYLGLYOXAL SYNTHASE"/>
    <property type="match status" value="1"/>
</dbReference>
<dbReference type="Pfam" id="PF02142">
    <property type="entry name" value="MGS"/>
    <property type="match status" value="1"/>
</dbReference>
<dbReference type="PIRSF" id="PIRSF006614">
    <property type="entry name" value="Methylglyox_syn"/>
    <property type="match status" value="1"/>
</dbReference>
<dbReference type="SMART" id="SM00851">
    <property type="entry name" value="MGS"/>
    <property type="match status" value="1"/>
</dbReference>
<dbReference type="SUPFAM" id="SSF52335">
    <property type="entry name" value="Methylglyoxal synthase-like"/>
    <property type="match status" value="1"/>
</dbReference>
<dbReference type="PROSITE" id="PS01335">
    <property type="entry name" value="METHYLGLYOXAL_SYNTH"/>
    <property type="match status" value="1"/>
</dbReference>
<dbReference type="PROSITE" id="PS51855">
    <property type="entry name" value="MGS"/>
    <property type="match status" value="1"/>
</dbReference>
<reference key="1">
    <citation type="journal article" date="2004" name="Nucleic Acids Res.">
        <title>Comparative analysis of the Borrelia garinii genome.</title>
        <authorList>
            <person name="Gloeckner G."/>
            <person name="Lehmann R."/>
            <person name="Romualdi A."/>
            <person name="Pradella S."/>
            <person name="Schulte-Spechtel U."/>
            <person name="Schilhabel M."/>
            <person name="Wilske B."/>
            <person name="Suehnel J."/>
            <person name="Platzer M."/>
        </authorList>
    </citation>
    <scope>NUCLEOTIDE SEQUENCE [LARGE SCALE GENOMIC DNA]</scope>
    <source>
        <strain>ATCC BAA-2496 / DSM 23469 / PBi</strain>
    </source>
</reference>
<feature type="chain" id="PRO_0000178615" description="Methylglyoxal synthase">
    <location>
        <begin position="1"/>
        <end position="126"/>
    </location>
</feature>
<feature type="domain" description="MGS-like" evidence="1">
    <location>
        <begin position="1"/>
        <end position="126"/>
    </location>
</feature>
<feature type="active site" description="Proton donor/acceptor" evidence="1">
    <location>
        <position position="62"/>
    </location>
</feature>
<feature type="binding site" evidence="1">
    <location>
        <position position="10"/>
    </location>
    <ligand>
        <name>substrate</name>
    </ligand>
</feature>
<feature type="binding site" evidence="1">
    <location>
        <position position="14"/>
    </location>
    <ligand>
        <name>substrate</name>
    </ligand>
</feature>
<feature type="binding site" evidence="1">
    <location>
        <begin position="36"/>
        <end position="39"/>
    </location>
    <ligand>
        <name>substrate</name>
    </ligand>
</feature>
<feature type="binding site" evidence="1">
    <location>
        <begin position="56"/>
        <end position="57"/>
    </location>
    <ligand>
        <name>substrate</name>
    </ligand>
</feature>
<feature type="binding site" evidence="1">
    <location>
        <position position="89"/>
    </location>
    <ligand>
        <name>substrate</name>
    </ligand>
</feature>
<gene>
    <name evidence="1" type="primary">mgsA</name>
    <name type="ordered locus">BG0363</name>
</gene>
<comment type="function">
    <text evidence="1">Catalyzes the formation of methylglyoxal from dihydroxyacetone phosphate.</text>
</comment>
<comment type="catalytic activity">
    <reaction evidence="1">
        <text>dihydroxyacetone phosphate = methylglyoxal + phosphate</text>
        <dbReference type="Rhea" id="RHEA:17937"/>
        <dbReference type="ChEBI" id="CHEBI:17158"/>
        <dbReference type="ChEBI" id="CHEBI:43474"/>
        <dbReference type="ChEBI" id="CHEBI:57642"/>
        <dbReference type="EC" id="4.2.3.3"/>
    </reaction>
</comment>
<comment type="similarity">
    <text evidence="1">Belongs to the methylglyoxal synthase family.</text>
</comment>
<protein>
    <recommendedName>
        <fullName evidence="1">Methylglyoxal synthase</fullName>
        <shortName evidence="1">MGS</shortName>
        <ecNumber evidence="1">4.2.3.3</ecNumber>
    </recommendedName>
</protein>